<feature type="chain" id="PRO_0000253585" description="Gamma-glutamyl phosphate reductase">
    <location>
        <begin position="1"/>
        <end position="422"/>
    </location>
</feature>
<dbReference type="EC" id="1.2.1.41" evidence="1"/>
<dbReference type="EMBL" id="CP000282">
    <property type="protein sequence ID" value="ABD82600.1"/>
    <property type="status" value="ALT_INIT"/>
    <property type="molecule type" value="Genomic_DNA"/>
</dbReference>
<dbReference type="RefSeq" id="WP_041324857.1">
    <property type="nucleotide sequence ID" value="NC_007912.1"/>
</dbReference>
<dbReference type="SMR" id="Q21FC9"/>
<dbReference type="STRING" id="203122.Sde_3345"/>
<dbReference type="GeneID" id="98614965"/>
<dbReference type="KEGG" id="sde:Sde_3345"/>
<dbReference type="eggNOG" id="COG0014">
    <property type="taxonomic scope" value="Bacteria"/>
</dbReference>
<dbReference type="HOGENOM" id="CLU_030231_0_0_6"/>
<dbReference type="OrthoDB" id="9809970at2"/>
<dbReference type="UniPathway" id="UPA00098">
    <property type="reaction ID" value="UER00360"/>
</dbReference>
<dbReference type="Proteomes" id="UP000001947">
    <property type="component" value="Chromosome"/>
</dbReference>
<dbReference type="GO" id="GO:0005737">
    <property type="term" value="C:cytoplasm"/>
    <property type="evidence" value="ECO:0007669"/>
    <property type="project" value="UniProtKB-SubCell"/>
</dbReference>
<dbReference type="GO" id="GO:0004350">
    <property type="term" value="F:glutamate-5-semialdehyde dehydrogenase activity"/>
    <property type="evidence" value="ECO:0007669"/>
    <property type="project" value="UniProtKB-UniRule"/>
</dbReference>
<dbReference type="GO" id="GO:0050661">
    <property type="term" value="F:NADP binding"/>
    <property type="evidence" value="ECO:0007669"/>
    <property type="project" value="InterPro"/>
</dbReference>
<dbReference type="GO" id="GO:0055129">
    <property type="term" value="P:L-proline biosynthetic process"/>
    <property type="evidence" value="ECO:0007669"/>
    <property type="project" value="UniProtKB-UniRule"/>
</dbReference>
<dbReference type="CDD" id="cd07079">
    <property type="entry name" value="ALDH_F18-19_ProA-GPR"/>
    <property type="match status" value="1"/>
</dbReference>
<dbReference type="FunFam" id="3.40.309.10:FF:000006">
    <property type="entry name" value="Gamma-glutamyl phosphate reductase"/>
    <property type="match status" value="1"/>
</dbReference>
<dbReference type="Gene3D" id="3.40.605.10">
    <property type="entry name" value="Aldehyde Dehydrogenase, Chain A, domain 1"/>
    <property type="match status" value="1"/>
</dbReference>
<dbReference type="Gene3D" id="3.40.309.10">
    <property type="entry name" value="Aldehyde Dehydrogenase, Chain A, domain 2"/>
    <property type="match status" value="1"/>
</dbReference>
<dbReference type="HAMAP" id="MF_00412">
    <property type="entry name" value="ProA"/>
    <property type="match status" value="1"/>
</dbReference>
<dbReference type="InterPro" id="IPR016161">
    <property type="entry name" value="Ald_DH/histidinol_DH"/>
</dbReference>
<dbReference type="InterPro" id="IPR016163">
    <property type="entry name" value="Ald_DH_C"/>
</dbReference>
<dbReference type="InterPro" id="IPR016162">
    <property type="entry name" value="Ald_DH_N"/>
</dbReference>
<dbReference type="InterPro" id="IPR015590">
    <property type="entry name" value="Aldehyde_DH_dom"/>
</dbReference>
<dbReference type="InterPro" id="IPR012134">
    <property type="entry name" value="Glu-5-SA_DH"/>
</dbReference>
<dbReference type="InterPro" id="IPR000965">
    <property type="entry name" value="GPR_dom"/>
</dbReference>
<dbReference type="NCBIfam" id="NF001221">
    <property type="entry name" value="PRK00197.1"/>
    <property type="match status" value="1"/>
</dbReference>
<dbReference type="NCBIfam" id="TIGR00407">
    <property type="entry name" value="proA"/>
    <property type="match status" value="1"/>
</dbReference>
<dbReference type="PANTHER" id="PTHR11063:SF8">
    <property type="entry name" value="DELTA-1-PYRROLINE-5-CARBOXYLATE SYNTHASE"/>
    <property type="match status" value="1"/>
</dbReference>
<dbReference type="PANTHER" id="PTHR11063">
    <property type="entry name" value="GLUTAMATE SEMIALDEHYDE DEHYDROGENASE"/>
    <property type="match status" value="1"/>
</dbReference>
<dbReference type="Pfam" id="PF00171">
    <property type="entry name" value="Aldedh"/>
    <property type="match status" value="2"/>
</dbReference>
<dbReference type="PIRSF" id="PIRSF000151">
    <property type="entry name" value="GPR"/>
    <property type="match status" value="1"/>
</dbReference>
<dbReference type="SUPFAM" id="SSF53720">
    <property type="entry name" value="ALDH-like"/>
    <property type="match status" value="1"/>
</dbReference>
<keyword id="KW-0028">Amino-acid biosynthesis</keyword>
<keyword id="KW-0963">Cytoplasm</keyword>
<keyword id="KW-0521">NADP</keyword>
<keyword id="KW-0560">Oxidoreductase</keyword>
<keyword id="KW-0641">Proline biosynthesis</keyword>
<keyword id="KW-1185">Reference proteome</keyword>
<proteinExistence type="inferred from homology"/>
<organism>
    <name type="scientific">Saccharophagus degradans (strain 2-40 / ATCC 43961 / DSM 17024)</name>
    <dbReference type="NCBI Taxonomy" id="203122"/>
    <lineage>
        <taxon>Bacteria</taxon>
        <taxon>Pseudomonadati</taxon>
        <taxon>Pseudomonadota</taxon>
        <taxon>Gammaproteobacteria</taxon>
        <taxon>Cellvibrionales</taxon>
        <taxon>Cellvibrionaceae</taxon>
        <taxon>Saccharophagus</taxon>
    </lineage>
</organism>
<name>PROA_SACD2</name>
<gene>
    <name evidence="1" type="primary">proA</name>
    <name type="ordered locus">Sde_3345</name>
</gene>
<sequence>MTVQDYMLTLGKQARAASRQMASADTGKKNAALLAIADAINSARDTIAAENARDMEAGRANGLDAALLDRLELTPERIDGMIEGLNQVAALPDPCGEITDLKYRPSGIQLGKKRTPLGVVGIIYESRPNVTVDAASLCLKSGNAAILRGGSEAIHSNKAVAVCIAAGLKAAGLPETAVQVVETTDRAAVGELITMTKYVDVVVPRGGKSLIERISADARVSVIKHLDGICHVYVDKTANLDKAFNIVINSKTHRYGVCNAMETMLVDEAIAADFLPRAAKEFAARGVELRGCEKTVALLTASDIPVVAALEEDWDTEYLAPILSIKLVANMDEAIEHINNHGSHHTDALVSENYTLARKFLTEVDSSSVMINASTRFADGFEYGLGAEIGISTDKIHARGPVGLEGLTSQKWIVFGDGHIRN</sequence>
<protein>
    <recommendedName>
        <fullName evidence="1">Gamma-glutamyl phosphate reductase</fullName>
        <shortName evidence="1">GPR</shortName>
        <ecNumber evidence="1">1.2.1.41</ecNumber>
    </recommendedName>
    <alternativeName>
        <fullName evidence="1">Glutamate-5-semialdehyde dehydrogenase</fullName>
    </alternativeName>
    <alternativeName>
        <fullName evidence="1">Glutamyl-gamma-semialdehyde dehydrogenase</fullName>
        <shortName evidence="1">GSA dehydrogenase</shortName>
    </alternativeName>
</protein>
<reference key="1">
    <citation type="journal article" date="2008" name="PLoS Genet.">
        <title>Complete genome sequence of the complex carbohydrate-degrading marine bacterium, Saccharophagus degradans strain 2-40 T.</title>
        <authorList>
            <person name="Weiner R.M."/>
            <person name="Taylor L.E. II"/>
            <person name="Henrissat B."/>
            <person name="Hauser L."/>
            <person name="Land M."/>
            <person name="Coutinho P.M."/>
            <person name="Rancurel C."/>
            <person name="Saunders E.H."/>
            <person name="Longmire A.G."/>
            <person name="Zhang H."/>
            <person name="Bayer E.A."/>
            <person name="Gilbert H.J."/>
            <person name="Larimer F."/>
            <person name="Zhulin I.B."/>
            <person name="Ekborg N.A."/>
            <person name="Lamed R."/>
            <person name="Richardson P.M."/>
            <person name="Borovok I."/>
            <person name="Hutcheson S."/>
        </authorList>
    </citation>
    <scope>NUCLEOTIDE SEQUENCE [LARGE SCALE GENOMIC DNA]</scope>
    <source>
        <strain>2-40 / ATCC 43961 / DSM 17024</strain>
    </source>
</reference>
<evidence type="ECO:0000255" key="1">
    <source>
        <dbReference type="HAMAP-Rule" id="MF_00412"/>
    </source>
</evidence>
<evidence type="ECO:0000305" key="2"/>
<comment type="function">
    <text evidence="1">Catalyzes the NADPH-dependent reduction of L-glutamate 5-phosphate into L-glutamate 5-semialdehyde and phosphate. The product spontaneously undergoes cyclization to form 1-pyrroline-5-carboxylate.</text>
</comment>
<comment type="catalytic activity">
    <reaction evidence="1">
        <text>L-glutamate 5-semialdehyde + phosphate + NADP(+) = L-glutamyl 5-phosphate + NADPH + H(+)</text>
        <dbReference type="Rhea" id="RHEA:19541"/>
        <dbReference type="ChEBI" id="CHEBI:15378"/>
        <dbReference type="ChEBI" id="CHEBI:43474"/>
        <dbReference type="ChEBI" id="CHEBI:57783"/>
        <dbReference type="ChEBI" id="CHEBI:58066"/>
        <dbReference type="ChEBI" id="CHEBI:58274"/>
        <dbReference type="ChEBI" id="CHEBI:58349"/>
        <dbReference type="EC" id="1.2.1.41"/>
    </reaction>
</comment>
<comment type="pathway">
    <text evidence="1">Amino-acid biosynthesis; L-proline biosynthesis; L-glutamate 5-semialdehyde from L-glutamate: step 2/2.</text>
</comment>
<comment type="subcellular location">
    <subcellularLocation>
        <location evidence="1">Cytoplasm</location>
    </subcellularLocation>
</comment>
<comment type="similarity">
    <text evidence="1">Belongs to the gamma-glutamyl phosphate reductase family.</text>
</comment>
<comment type="sequence caution" evidence="2">
    <conflict type="erroneous initiation">
        <sequence resource="EMBL-CDS" id="ABD82600"/>
    </conflict>
</comment>
<accession>Q21FC9</accession>